<name>HUTU_BRUC2</name>
<dbReference type="EC" id="4.2.1.49" evidence="1"/>
<dbReference type="EMBL" id="CP000873">
    <property type="protein sequence ID" value="ABX64099.1"/>
    <property type="molecule type" value="Genomic_DNA"/>
</dbReference>
<dbReference type="RefSeq" id="WP_004690364.1">
    <property type="nucleotide sequence ID" value="NC_010104.1"/>
</dbReference>
<dbReference type="SMR" id="A9MCL2"/>
<dbReference type="GeneID" id="55592564"/>
<dbReference type="KEGG" id="bcs:BCAN_B0952"/>
<dbReference type="HOGENOM" id="CLU_018868_0_1_5"/>
<dbReference type="PhylomeDB" id="A9MCL2"/>
<dbReference type="UniPathway" id="UPA00379">
    <property type="reaction ID" value="UER00550"/>
</dbReference>
<dbReference type="Proteomes" id="UP000001385">
    <property type="component" value="Chromosome II"/>
</dbReference>
<dbReference type="GO" id="GO:0005737">
    <property type="term" value="C:cytoplasm"/>
    <property type="evidence" value="ECO:0007669"/>
    <property type="project" value="UniProtKB-SubCell"/>
</dbReference>
<dbReference type="GO" id="GO:0016153">
    <property type="term" value="F:urocanate hydratase activity"/>
    <property type="evidence" value="ECO:0007669"/>
    <property type="project" value="UniProtKB-UniRule"/>
</dbReference>
<dbReference type="GO" id="GO:0019556">
    <property type="term" value="P:L-histidine catabolic process to glutamate and formamide"/>
    <property type="evidence" value="ECO:0007669"/>
    <property type="project" value="UniProtKB-UniPathway"/>
</dbReference>
<dbReference type="GO" id="GO:0019557">
    <property type="term" value="P:L-histidine catabolic process to glutamate and formate"/>
    <property type="evidence" value="ECO:0007669"/>
    <property type="project" value="UniProtKB-UniPathway"/>
</dbReference>
<dbReference type="FunFam" id="3.40.50.10730:FF:000001">
    <property type="entry name" value="Urocanate hydratase"/>
    <property type="match status" value="1"/>
</dbReference>
<dbReference type="Gene3D" id="3.40.50.10730">
    <property type="entry name" value="Urocanase like domains"/>
    <property type="match status" value="1"/>
</dbReference>
<dbReference type="Gene3D" id="3.40.1770.10">
    <property type="entry name" value="Urocanase superfamily"/>
    <property type="match status" value="1"/>
</dbReference>
<dbReference type="HAMAP" id="MF_00577">
    <property type="entry name" value="HutU"/>
    <property type="match status" value="1"/>
</dbReference>
<dbReference type="InterPro" id="IPR055351">
    <property type="entry name" value="Urocanase"/>
</dbReference>
<dbReference type="InterPro" id="IPR023637">
    <property type="entry name" value="Urocanase-like"/>
</dbReference>
<dbReference type="InterPro" id="IPR035401">
    <property type="entry name" value="Urocanase_C"/>
</dbReference>
<dbReference type="InterPro" id="IPR038364">
    <property type="entry name" value="Urocanase_central_sf"/>
</dbReference>
<dbReference type="InterPro" id="IPR023636">
    <property type="entry name" value="Urocanase_CS"/>
</dbReference>
<dbReference type="InterPro" id="IPR035400">
    <property type="entry name" value="Urocanase_N"/>
</dbReference>
<dbReference type="InterPro" id="IPR035085">
    <property type="entry name" value="Urocanase_Rossmann-like"/>
</dbReference>
<dbReference type="InterPro" id="IPR036190">
    <property type="entry name" value="Urocanase_sf"/>
</dbReference>
<dbReference type="NCBIfam" id="TIGR01228">
    <property type="entry name" value="hutU"/>
    <property type="match status" value="1"/>
</dbReference>
<dbReference type="NCBIfam" id="NF003820">
    <property type="entry name" value="PRK05414.1"/>
    <property type="match status" value="1"/>
</dbReference>
<dbReference type="PANTHER" id="PTHR12216">
    <property type="entry name" value="UROCANATE HYDRATASE"/>
    <property type="match status" value="1"/>
</dbReference>
<dbReference type="PANTHER" id="PTHR12216:SF4">
    <property type="entry name" value="UROCANATE HYDRATASE"/>
    <property type="match status" value="1"/>
</dbReference>
<dbReference type="Pfam" id="PF01175">
    <property type="entry name" value="Urocanase"/>
    <property type="match status" value="1"/>
</dbReference>
<dbReference type="Pfam" id="PF17392">
    <property type="entry name" value="Urocanase_C"/>
    <property type="match status" value="1"/>
</dbReference>
<dbReference type="Pfam" id="PF17391">
    <property type="entry name" value="Urocanase_N"/>
    <property type="match status" value="1"/>
</dbReference>
<dbReference type="PIRSF" id="PIRSF001423">
    <property type="entry name" value="Urocanate_hydrat"/>
    <property type="match status" value="1"/>
</dbReference>
<dbReference type="SUPFAM" id="SSF111326">
    <property type="entry name" value="Urocanase"/>
    <property type="match status" value="1"/>
</dbReference>
<dbReference type="PROSITE" id="PS01233">
    <property type="entry name" value="UROCANASE"/>
    <property type="match status" value="1"/>
</dbReference>
<evidence type="ECO:0000255" key="1">
    <source>
        <dbReference type="HAMAP-Rule" id="MF_00577"/>
    </source>
</evidence>
<evidence type="ECO:0000256" key="2">
    <source>
        <dbReference type="SAM" id="MobiDB-lite"/>
    </source>
</evidence>
<keyword id="KW-0963">Cytoplasm</keyword>
<keyword id="KW-0369">Histidine metabolism</keyword>
<keyword id="KW-0456">Lyase</keyword>
<keyword id="KW-0520">NAD</keyword>
<keyword id="KW-1185">Reference proteome</keyword>
<proteinExistence type="inferred from homology"/>
<sequence>MSNPRHNEREVRSPRGDELNAKSWLTEAPLRMLMNNLDPDVAERPHELVVYGGIGRAARTWDDFDRIVATLKTLNDDETLLVQSGKPVGVFRTHKDAPRVLIANSNLVPHWANWDHFNELDKKDLAMYGQMTAGSWIYIGAQGIVQGTYETFVEAGRQHYGGNLKGRWILTGGLGGMGGAQPLAAVMAGACCLAVECDETRADFRLRTRYVDEKTHSLDEALAKIDAWTKAGEAKSIALIGNAAEIFPELVKRGVKPDIVTDQTSAHDPVHGYLPLGWTVAEWRAKQENDPKAVEKVARASMKVQVQAMLDFWNAGIPTVDYGNNIRQMALEEGLENAFAFPGFVPAYIRPLFCRGIGPFRWAALSGDPEDIAKTDAKVKELLPDNKHLHNWLDMAKERIAFQGLPARICWVGLGDRHRLGLAFNEMVRNGELKAPIVIGRDHLDSGSVASPNRETEAMKDGSDAVSDWPLLNALLNTASGATWVSLHHGGGVGMGFSQHAGMVICCDGTEDADRRLERVLWNDPATGVMRHADAGYDIALDWARKQGLRLPAILGN</sequence>
<protein>
    <recommendedName>
        <fullName evidence="1">Urocanate hydratase</fullName>
        <shortName evidence="1">Urocanase</shortName>
        <ecNumber evidence="1">4.2.1.49</ecNumber>
    </recommendedName>
    <alternativeName>
        <fullName evidence="1">Imidazolonepropionate hydrolase</fullName>
    </alternativeName>
</protein>
<comment type="function">
    <text evidence="1">Catalyzes the conversion of urocanate to 4-imidazolone-5-propionate.</text>
</comment>
<comment type="catalytic activity">
    <reaction evidence="1">
        <text>4-imidazolone-5-propanoate = trans-urocanate + H2O</text>
        <dbReference type="Rhea" id="RHEA:13101"/>
        <dbReference type="ChEBI" id="CHEBI:15377"/>
        <dbReference type="ChEBI" id="CHEBI:17771"/>
        <dbReference type="ChEBI" id="CHEBI:77893"/>
        <dbReference type="EC" id="4.2.1.49"/>
    </reaction>
</comment>
<comment type="cofactor">
    <cofactor evidence="1">
        <name>NAD(+)</name>
        <dbReference type="ChEBI" id="CHEBI:57540"/>
    </cofactor>
    <text evidence="1">Binds 1 NAD(+) per subunit.</text>
</comment>
<comment type="pathway">
    <text evidence="1">Amino-acid degradation; L-histidine degradation into L-glutamate; N-formimidoyl-L-glutamate from L-histidine: step 2/3.</text>
</comment>
<comment type="subcellular location">
    <subcellularLocation>
        <location evidence="1">Cytoplasm</location>
    </subcellularLocation>
</comment>
<comment type="similarity">
    <text evidence="1">Belongs to the urocanase family.</text>
</comment>
<organism>
    <name type="scientific">Brucella canis (strain ATCC 23365 / NCTC 10854 / RM-666)</name>
    <dbReference type="NCBI Taxonomy" id="483179"/>
    <lineage>
        <taxon>Bacteria</taxon>
        <taxon>Pseudomonadati</taxon>
        <taxon>Pseudomonadota</taxon>
        <taxon>Alphaproteobacteria</taxon>
        <taxon>Hyphomicrobiales</taxon>
        <taxon>Brucellaceae</taxon>
        <taxon>Brucella/Ochrobactrum group</taxon>
        <taxon>Brucella</taxon>
    </lineage>
</organism>
<gene>
    <name evidence="1" type="primary">hutU</name>
    <name type="ordered locus">BCAN_B0952</name>
</gene>
<reference key="1">
    <citation type="submission" date="2007-10" db="EMBL/GenBank/DDBJ databases">
        <title>Brucella canis ATCC 23365 whole genome shotgun sequencing project.</title>
        <authorList>
            <person name="Setubal J.C."/>
            <person name="Bowns C."/>
            <person name="Boyle S."/>
            <person name="Crasta O.R."/>
            <person name="Czar M.J."/>
            <person name="Dharmanolla C."/>
            <person name="Gillespie J.J."/>
            <person name="Kenyon R.W."/>
            <person name="Lu J."/>
            <person name="Mane S."/>
            <person name="Mohapatra S."/>
            <person name="Nagrani S."/>
            <person name="Purkayastha A."/>
            <person name="Rajasimha H.K."/>
            <person name="Shallom J.M."/>
            <person name="Shallom S."/>
            <person name="Shukla M."/>
            <person name="Snyder E.E."/>
            <person name="Sobral B.W."/>
            <person name="Wattam A.R."/>
            <person name="Will R."/>
            <person name="Williams K."/>
            <person name="Yoo H."/>
            <person name="Bruce D."/>
            <person name="Detter C."/>
            <person name="Munk C."/>
            <person name="Brettin T.S."/>
        </authorList>
    </citation>
    <scope>NUCLEOTIDE SEQUENCE [LARGE SCALE GENOMIC DNA]</scope>
    <source>
        <strain>ATCC 23365 / NCTC 10854 / RM-666</strain>
    </source>
</reference>
<feature type="chain" id="PRO_1000082347" description="Urocanate hydratase">
    <location>
        <begin position="1"/>
        <end position="557"/>
    </location>
</feature>
<feature type="region of interest" description="Disordered" evidence="2">
    <location>
        <begin position="1"/>
        <end position="20"/>
    </location>
</feature>
<feature type="active site" evidence="1">
    <location>
        <position position="410"/>
    </location>
</feature>
<feature type="binding site" evidence="1">
    <location>
        <begin position="52"/>
        <end position="53"/>
    </location>
    <ligand>
        <name>NAD(+)</name>
        <dbReference type="ChEBI" id="CHEBI:57540"/>
    </ligand>
</feature>
<feature type="binding site" evidence="1">
    <location>
        <position position="130"/>
    </location>
    <ligand>
        <name>NAD(+)</name>
        <dbReference type="ChEBI" id="CHEBI:57540"/>
    </ligand>
</feature>
<feature type="binding site" evidence="1">
    <location>
        <begin position="176"/>
        <end position="178"/>
    </location>
    <ligand>
        <name>NAD(+)</name>
        <dbReference type="ChEBI" id="CHEBI:57540"/>
    </ligand>
</feature>
<feature type="binding site" evidence="1">
    <location>
        <position position="196"/>
    </location>
    <ligand>
        <name>NAD(+)</name>
        <dbReference type="ChEBI" id="CHEBI:57540"/>
    </ligand>
</feature>
<feature type="binding site" evidence="1">
    <location>
        <position position="201"/>
    </location>
    <ligand>
        <name>NAD(+)</name>
        <dbReference type="ChEBI" id="CHEBI:57540"/>
    </ligand>
</feature>
<feature type="binding site" evidence="1">
    <location>
        <begin position="242"/>
        <end position="243"/>
    </location>
    <ligand>
        <name>NAD(+)</name>
        <dbReference type="ChEBI" id="CHEBI:57540"/>
    </ligand>
</feature>
<feature type="binding site" evidence="1">
    <location>
        <begin position="263"/>
        <end position="267"/>
    </location>
    <ligand>
        <name>NAD(+)</name>
        <dbReference type="ChEBI" id="CHEBI:57540"/>
    </ligand>
</feature>
<feature type="binding site" evidence="1">
    <location>
        <begin position="273"/>
        <end position="274"/>
    </location>
    <ligand>
        <name>NAD(+)</name>
        <dbReference type="ChEBI" id="CHEBI:57540"/>
    </ligand>
</feature>
<feature type="binding site" evidence="1">
    <location>
        <position position="322"/>
    </location>
    <ligand>
        <name>NAD(+)</name>
        <dbReference type="ChEBI" id="CHEBI:57540"/>
    </ligand>
</feature>
<feature type="binding site" evidence="1">
    <location>
        <position position="492"/>
    </location>
    <ligand>
        <name>NAD(+)</name>
        <dbReference type="ChEBI" id="CHEBI:57540"/>
    </ligand>
</feature>
<accession>A9MCL2</accession>